<reference evidence="7" key="1">
    <citation type="journal article" date="1999" name="Genetics">
        <title>The molecular genetics of red and green color vision in mammals.</title>
        <authorList>
            <person name="Yokoyama S."/>
            <person name="Radlwimmer F.B."/>
        </authorList>
    </citation>
    <scope>NUCLEOTIDE SEQUENCE [MRNA]</scope>
    <scope>BIOPHYSICOCHEMICAL PROPERTIES</scope>
    <scope>TISSUE SPECIFICITY</scope>
</reference>
<reference key="2">
    <citation type="journal article" date="1998" name="Mol. Biol. Evol.">
        <title>The 'five-sites' rule and the evolution of red and green color vision in mammals.</title>
        <authorList>
            <person name="Yokoyama S."/>
            <person name="Radlwimmer F.B."/>
        </authorList>
    </citation>
    <scope>NUCLEOTIDE SEQUENCE [MRNA] OF 48-320</scope>
</reference>
<reference evidence="8" key="3">
    <citation type="journal article" date="2009" name="Science">
        <title>Genome sequence, comparative analysis, and population genetics of the domestic horse.</title>
        <authorList>
            <person name="Wade C.M."/>
            <person name="Giulotto E."/>
            <person name="Sigurdsson S."/>
            <person name="Zoli M."/>
            <person name="Gnerre S."/>
            <person name="Imsland F."/>
            <person name="Lear T.L."/>
            <person name="Adelson D.L."/>
            <person name="Bailey E."/>
            <person name="Bellone R.R."/>
            <person name="Bloecker H."/>
            <person name="Distl O."/>
            <person name="Edgar R.C."/>
            <person name="Garber M."/>
            <person name="Leeb T."/>
            <person name="Mauceli E."/>
            <person name="MacLeod J.N."/>
            <person name="Penedo M.C.T."/>
            <person name="Raison J.M."/>
            <person name="Sharpe T."/>
            <person name="Vogel J."/>
            <person name="Andersson L."/>
            <person name="Antczak D.F."/>
            <person name="Biagi T."/>
            <person name="Binns M.M."/>
            <person name="Chowdhary B.P."/>
            <person name="Coleman S.J."/>
            <person name="Della Valle G."/>
            <person name="Fryc S."/>
            <person name="Guerin G."/>
            <person name="Hasegawa T."/>
            <person name="Hill E.W."/>
            <person name="Jurka J."/>
            <person name="Kiialainen A."/>
            <person name="Lindgren G."/>
            <person name="Liu J."/>
            <person name="Magnani E."/>
            <person name="Mickelson J.R."/>
            <person name="Murray J."/>
            <person name="Nergadze S.G."/>
            <person name="Onofrio R."/>
            <person name="Pedroni S."/>
            <person name="Piras M.F."/>
            <person name="Raudsepp T."/>
            <person name="Rocchi M."/>
            <person name="Roeed K.H."/>
            <person name="Ryder O.A."/>
            <person name="Searle S."/>
            <person name="Skow L."/>
            <person name="Swinburne J.E."/>
            <person name="Syvaenen A.C."/>
            <person name="Tozaki T."/>
            <person name="Valberg S.J."/>
            <person name="Vaudin M."/>
            <person name="White J.R."/>
            <person name="Zody M.C."/>
            <person name="Lander E.S."/>
            <person name="Lindblad-Toh K."/>
        </authorList>
    </citation>
    <scope>NUCLEOTIDE SEQUENCE [LARGE SCALE GENOMIC DNA]</scope>
    <source>
        <strain evidence="8">Thoroughbred</strain>
    </source>
</reference>
<feature type="chain" id="PRO_0000197801" description="Long-wave-sensitive opsin 1">
    <location>
        <begin position="1"/>
        <end position="364"/>
    </location>
</feature>
<feature type="topological domain" description="Extracellular" evidence="6">
    <location>
        <begin position="1"/>
        <end position="52"/>
    </location>
</feature>
<feature type="transmembrane region" description="Helical; Name=1" evidence="2">
    <location>
        <begin position="53"/>
        <end position="77"/>
    </location>
</feature>
<feature type="topological domain" description="Cytoplasmic" evidence="6">
    <location>
        <begin position="78"/>
        <end position="89"/>
    </location>
</feature>
<feature type="transmembrane region" description="Helical; Name=2" evidence="2">
    <location>
        <begin position="90"/>
        <end position="115"/>
    </location>
</feature>
<feature type="topological domain" description="Extracellular" evidence="6">
    <location>
        <begin position="116"/>
        <end position="129"/>
    </location>
</feature>
<feature type="transmembrane region" description="Helical; Name=3" evidence="2">
    <location>
        <begin position="130"/>
        <end position="149"/>
    </location>
</feature>
<feature type="topological domain" description="Cytoplasmic" evidence="6">
    <location>
        <begin position="150"/>
        <end position="168"/>
    </location>
</feature>
<feature type="transmembrane region" description="Helical; Name=4" evidence="2">
    <location>
        <begin position="169"/>
        <end position="192"/>
    </location>
</feature>
<feature type="topological domain" description="Extracellular" evidence="6">
    <location>
        <begin position="193"/>
        <end position="218"/>
    </location>
</feature>
<feature type="transmembrane region" description="Helical; Name=5" evidence="2">
    <location>
        <begin position="219"/>
        <end position="246"/>
    </location>
</feature>
<feature type="topological domain" description="Cytoplasmic" evidence="6">
    <location>
        <begin position="247"/>
        <end position="268"/>
    </location>
</feature>
<feature type="transmembrane region" description="Helical; Name=6" evidence="2">
    <location>
        <begin position="269"/>
        <end position="292"/>
    </location>
</feature>
<feature type="topological domain" description="Extracellular" evidence="6">
    <location>
        <begin position="293"/>
        <end position="300"/>
    </location>
</feature>
<feature type="transmembrane region" description="Helical; Name=7" evidence="2">
    <location>
        <begin position="301"/>
        <end position="325"/>
    </location>
</feature>
<feature type="topological domain" description="Cytoplasmic" evidence="6">
    <location>
        <begin position="326"/>
        <end position="364"/>
    </location>
</feature>
<feature type="modified residue" description="N6-(retinylidene)lysine" evidence="6">
    <location>
        <position position="312"/>
    </location>
</feature>
<feature type="glycosylation site" description="O-linked (GlcNAc) serine" evidence="1">
    <location>
        <position position="22"/>
    </location>
</feature>
<feature type="glycosylation site" description="N-linked (GlcNAc...) asparagine" evidence="3">
    <location>
        <position position="34"/>
    </location>
</feature>
<feature type="disulfide bond" evidence="4">
    <location>
        <begin position="126"/>
        <end position="203"/>
    </location>
</feature>
<proteinExistence type="evidence at protein level"/>
<gene>
    <name type="primary">OPN1LW</name>
    <name type="synonym">RCP</name>
</gene>
<organism>
    <name type="scientific">Equus caballus</name>
    <name type="common">Horse</name>
    <dbReference type="NCBI Taxonomy" id="9796"/>
    <lineage>
        <taxon>Eukaryota</taxon>
        <taxon>Metazoa</taxon>
        <taxon>Chordata</taxon>
        <taxon>Craniata</taxon>
        <taxon>Vertebrata</taxon>
        <taxon>Euteleostomi</taxon>
        <taxon>Mammalia</taxon>
        <taxon>Eutheria</taxon>
        <taxon>Laurasiatheria</taxon>
        <taxon>Perissodactyla</taxon>
        <taxon>Equidae</taxon>
        <taxon>Equus</taxon>
    </lineage>
</organism>
<evidence type="ECO:0000250" key="1">
    <source>
        <dbReference type="UniProtKB" id="Q9BGI7"/>
    </source>
</evidence>
<evidence type="ECO:0000255" key="2"/>
<evidence type="ECO:0000255" key="3">
    <source>
        <dbReference type="PROSITE-ProRule" id="PRU00498"/>
    </source>
</evidence>
<evidence type="ECO:0000255" key="4">
    <source>
        <dbReference type="PROSITE-ProRule" id="PRU00521"/>
    </source>
</evidence>
<evidence type="ECO:0000269" key="5">
    <source>
    </source>
</evidence>
<evidence type="ECO:0000305" key="6"/>
<evidence type="ECO:0000312" key="7">
    <source>
        <dbReference type="EMBL" id="AAD30524.1"/>
    </source>
</evidence>
<evidence type="ECO:0000312" key="8">
    <source>
        <dbReference type="Proteomes" id="UP000002281"/>
    </source>
</evidence>
<protein>
    <recommendedName>
        <fullName>Long-wave-sensitive opsin 1</fullName>
    </recommendedName>
    <alternativeName>
        <fullName>Red cone photoreceptor pigment</fullName>
    </alternativeName>
    <alternativeName>
        <fullName>Red-sensitive opsin</fullName>
    </alternativeName>
</protein>
<keyword id="KW-0157">Chromophore</keyword>
<keyword id="KW-1015">Disulfide bond</keyword>
<keyword id="KW-0297">G-protein coupled receptor</keyword>
<keyword id="KW-0325">Glycoprotein</keyword>
<keyword id="KW-0472">Membrane</keyword>
<keyword id="KW-0597">Phosphoprotein</keyword>
<keyword id="KW-0600">Photoreceptor protein</keyword>
<keyword id="KW-0675">Receptor</keyword>
<keyword id="KW-1185">Reference proteome</keyword>
<keyword id="KW-0681">Retinal protein</keyword>
<keyword id="KW-0716">Sensory transduction</keyword>
<keyword id="KW-0807">Transducer</keyword>
<keyword id="KW-0812">Transmembrane</keyword>
<keyword id="KW-1133">Transmembrane helix</keyword>
<keyword id="KW-0844">Vision</keyword>
<comment type="function">
    <text>Visual pigments are the light-absorbing molecules that mediate vision. They consist of an apoprotein, opsin, covalently linked to cis-retinal.</text>
</comment>
<comment type="biophysicochemical properties">
    <absorption>
        <max evidence="5">545 nm</max>
    </absorption>
</comment>
<comment type="subcellular location">
    <subcellularLocation>
        <location evidence="2">Membrane</location>
        <topology evidence="2">Multi-pass membrane protein</topology>
    </subcellularLocation>
</comment>
<comment type="tissue specificity">
    <text evidence="5">The three color pigments are found in the cone photoreceptor cells. Expressed in retina (PubMed:10511567).</text>
</comment>
<comment type="PTM">
    <text>Phosphorylated on some or all of the serine and threonine residues present in the C-terminal region.</text>
</comment>
<comment type="similarity">
    <text evidence="4">Belongs to the G-protein coupled receptor 1 family. Opsin subfamily.</text>
</comment>
<dbReference type="EMBL" id="AF132043">
    <property type="protein sequence ID" value="AAD30524.1"/>
    <property type="molecule type" value="mRNA"/>
</dbReference>
<dbReference type="EMBL" id="AF031531">
    <property type="protein sequence ID" value="AAB86634.1"/>
    <property type="molecule type" value="mRNA"/>
</dbReference>
<dbReference type="RefSeq" id="NP_001075314.1">
    <property type="nucleotide sequence ID" value="NM_001081845.1"/>
</dbReference>
<dbReference type="SMR" id="O18912"/>
<dbReference type="FunCoup" id="O18912">
    <property type="interactions" value="121"/>
</dbReference>
<dbReference type="STRING" id="9796.ENSECAP00000016460"/>
<dbReference type="GlyCosmos" id="O18912">
    <property type="glycosylation" value="2 sites, No reported glycans"/>
</dbReference>
<dbReference type="PaxDb" id="9796-ENSECAP00000016460"/>
<dbReference type="Ensembl" id="ENSECAT00000020072.2">
    <property type="protein sequence ID" value="ENSECAP00000016460.1"/>
    <property type="gene ID" value="ENSECAG00000018684.2"/>
</dbReference>
<dbReference type="GeneID" id="100033892"/>
<dbReference type="KEGG" id="ecb:100033892"/>
<dbReference type="CTD" id="5956"/>
<dbReference type="GeneTree" id="ENSGT01030000234549"/>
<dbReference type="HOGENOM" id="CLU_009579_3_0_1"/>
<dbReference type="InParanoid" id="O18912"/>
<dbReference type="OMA" id="EWGKQSF"/>
<dbReference type="OrthoDB" id="8545112at2759"/>
<dbReference type="TreeFam" id="TF324998"/>
<dbReference type="Proteomes" id="UP000002281">
    <property type="component" value="Chromosome X"/>
</dbReference>
<dbReference type="Bgee" id="ENSECAG00000018684">
    <property type="expression patterns" value="Expressed in retina and 2 other cell types or tissues"/>
</dbReference>
<dbReference type="GO" id="GO:0001750">
    <property type="term" value="C:photoreceptor outer segment"/>
    <property type="evidence" value="ECO:0000318"/>
    <property type="project" value="GO_Central"/>
</dbReference>
<dbReference type="GO" id="GO:0005886">
    <property type="term" value="C:plasma membrane"/>
    <property type="evidence" value="ECO:0000318"/>
    <property type="project" value="GO_Central"/>
</dbReference>
<dbReference type="GO" id="GO:0008020">
    <property type="term" value="F:G protein-coupled photoreceptor activity"/>
    <property type="evidence" value="ECO:0000318"/>
    <property type="project" value="GO_Central"/>
</dbReference>
<dbReference type="GO" id="GO:0071482">
    <property type="term" value="P:cellular response to light stimulus"/>
    <property type="evidence" value="ECO:0000318"/>
    <property type="project" value="GO_Central"/>
</dbReference>
<dbReference type="GO" id="GO:0007186">
    <property type="term" value="P:G protein-coupled receptor signaling pathway"/>
    <property type="evidence" value="ECO:0000318"/>
    <property type="project" value="GO_Central"/>
</dbReference>
<dbReference type="GO" id="GO:0007602">
    <property type="term" value="P:phototransduction"/>
    <property type="evidence" value="ECO:0000318"/>
    <property type="project" value="GO_Central"/>
</dbReference>
<dbReference type="GO" id="GO:0007601">
    <property type="term" value="P:visual perception"/>
    <property type="evidence" value="ECO:0007669"/>
    <property type="project" value="UniProtKB-KW"/>
</dbReference>
<dbReference type="FunFam" id="1.20.1070.10:FF:000090">
    <property type="entry name" value="Long-wave-sensitive opsin 1"/>
    <property type="match status" value="1"/>
</dbReference>
<dbReference type="Gene3D" id="1.20.1070.10">
    <property type="entry name" value="Rhodopsin 7-helix transmembrane proteins"/>
    <property type="match status" value="1"/>
</dbReference>
<dbReference type="InterPro" id="IPR050125">
    <property type="entry name" value="GPCR_opsins"/>
</dbReference>
<dbReference type="InterPro" id="IPR000276">
    <property type="entry name" value="GPCR_Rhodpsn"/>
</dbReference>
<dbReference type="InterPro" id="IPR017452">
    <property type="entry name" value="GPCR_Rhodpsn_7TM"/>
</dbReference>
<dbReference type="InterPro" id="IPR001760">
    <property type="entry name" value="Opsin"/>
</dbReference>
<dbReference type="InterPro" id="IPR000378">
    <property type="entry name" value="Opsin_red/grn"/>
</dbReference>
<dbReference type="InterPro" id="IPR027430">
    <property type="entry name" value="Retinal_BS"/>
</dbReference>
<dbReference type="PANTHER" id="PTHR24240">
    <property type="entry name" value="OPSIN"/>
    <property type="match status" value="1"/>
</dbReference>
<dbReference type="Pfam" id="PF00001">
    <property type="entry name" value="7tm_1"/>
    <property type="match status" value="1"/>
</dbReference>
<dbReference type="PRINTS" id="PR00237">
    <property type="entry name" value="GPCRRHODOPSN"/>
</dbReference>
<dbReference type="PRINTS" id="PR00238">
    <property type="entry name" value="OPSIN"/>
</dbReference>
<dbReference type="PRINTS" id="PR00575">
    <property type="entry name" value="OPSINREDGRN"/>
</dbReference>
<dbReference type="SMART" id="SM01381">
    <property type="entry name" value="7TM_GPCR_Srsx"/>
    <property type="match status" value="1"/>
</dbReference>
<dbReference type="SUPFAM" id="SSF81321">
    <property type="entry name" value="Family A G protein-coupled receptor-like"/>
    <property type="match status" value="1"/>
</dbReference>
<dbReference type="PROSITE" id="PS00237">
    <property type="entry name" value="G_PROTEIN_RECEP_F1_1"/>
    <property type="match status" value="1"/>
</dbReference>
<dbReference type="PROSITE" id="PS50262">
    <property type="entry name" value="G_PROTEIN_RECEP_F1_2"/>
    <property type="match status" value="1"/>
</dbReference>
<dbReference type="PROSITE" id="PS00238">
    <property type="entry name" value="OPSIN"/>
    <property type="match status" value="1"/>
</dbReference>
<sequence length="364" mass="40450">MAQRWGPQKLAGGQPQAGFEDSTQASIFTYTNNNATRDPFEGPNYHIAPRWVYHVTSAWMIFVVIASVFTNGLVLAATMRFKKLRHPLNWILVNLAVADLAETIIASTISVVNQIYGYFVLGHPMCVVEGYTVSLCGITGLWSLAIISWERWMVVCKPFGNVRFDAKLAVAGIAFSWIWAAVWTAPPIFGWSRYWPHGLKTSCGPDVFSGSSYPGVQSYMIVLMITCCIIPLSVIVLCYLQVWLAIRAVAKQQKESESTQKAEKEVTRMVMVMVFAFCLCWGPYTFFACFAAAHPGYAFHPLVAALPAYFAKSATIYNPIIYVFMNRQFRNCILQLFGKKVDDSSELSSVSKTEASSVSSVSPA</sequence>
<accession>O18912</accession>
<accession>Q9TU70</accession>
<name>OPSR_HORSE</name>